<organism>
    <name type="scientific">Rhodopseudomonas palustris (strain HaA2)</name>
    <dbReference type="NCBI Taxonomy" id="316058"/>
    <lineage>
        <taxon>Bacteria</taxon>
        <taxon>Pseudomonadati</taxon>
        <taxon>Pseudomonadota</taxon>
        <taxon>Alphaproteobacteria</taxon>
        <taxon>Hyphomicrobiales</taxon>
        <taxon>Nitrobacteraceae</taxon>
        <taxon>Rhodopseudomonas</taxon>
    </lineage>
</organism>
<name>RL14_RHOP2</name>
<reference key="1">
    <citation type="submission" date="2006-01" db="EMBL/GenBank/DDBJ databases">
        <title>Complete sequence of Rhodopseudomonas palustris HaA2.</title>
        <authorList>
            <consortium name="US DOE Joint Genome Institute"/>
            <person name="Copeland A."/>
            <person name="Lucas S."/>
            <person name="Lapidus A."/>
            <person name="Barry K."/>
            <person name="Detter J.C."/>
            <person name="Glavina T."/>
            <person name="Hammon N."/>
            <person name="Israni S."/>
            <person name="Pitluck S."/>
            <person name="Chain P."/>
            <person name="Malfatti S."/>
            <person name="Shin M."/>
            <person name="Vergez L."/>
            <person name="Schmutz J."/>
            <person name="Larimer F."/>
            <person name="Land M."/>
            <person name="Hauser L."/>
            <person name="Pelletier D.A."/>
            <person name="Kyrpides N."/>
            <person name="Anderson I."/>
            <person name="Oda Y."/>
            <person name="Harwood C.S."/>
            <person name="Richardson P."/>
        </authorList>
    </citation>
    <scope>NUCLEOTIDE SEQUENCE [LARGE SCALE GENOMIC DNA]</scope>
    <source>
        <strain>HaA2</strain>
    </source>
</reference>
<proteinExistence type="inferred from homology"/>
<sequence length="122" mass="13501">MIQMQTNLDVADNSGARRVMCIKVLGGSKRRYATVGDVIVVSIKEAIPRGKVKKGDVMKAVVVRVRKDIRRPDGSVIRFDRNAAVLINNQSEPVGTRIFGPVPRELRAKNHMKIISLAPEVL</sequence>
<dbReference type="EMBL" id="CP000250">
    <property type="protein sequence ID" value="ABD07010.1"/>
    <property type="molecule type" value="Genomic_DNA"/>
</dbReference>
<dbReference type="RefSeq" id="WP_011441195.1">
    <property type="nucleotide sequence ID" value="NC_007778.1"/>
</dbReference>
<dbReference type="SMR" id="Q2IXQ0"/>
<dbReference type="STRING" id="316058.RPB_2305"/>
<dbReference type="KEGG" id="rpb:RPB_2305"/>
<dbReference type="eggNOG" id="COG0093">
    <property type="taxonomic scope" value="Bacteria"/>
</dbReference>
<dbReference type="HOGENOM" id="CLU_095071_2_1_5"/>
<dbReference type="OrthoDB" id="9806379at2"/>
<dbReference type="Proteomes" id="UP000008809">
    <property type="component" value="Chromosome"/>
</dbReference>
<dbReference type="GO" id="GO:0022625">
    <property type="term" value="C:cytosolic large ribosomal subunit"/>
    <property type="evidence" value="ECO:0007669"/>
    <property type="project" value="TreeGrafter"/>
</dbReference>
<dbReference type="GO" id="GO:0070180">
    <property type="term" value="F:large ribosomal subunit rRNA binding"/>
    <property type="evidence" value="ECO:0007669"/>
    <property type="project" value="TreeGrafter"/>
</dbReference>
<dbReference type="GO" id="GO:0003735">
    <property type="term" value="F:structural constituent of ribosome"/>
    <property type="evidence" value="ECO:0007669"/>
    <property type="project" value="InterPro"/>
</dbReference>
<dbReference type="GO" id="GO:0006412">
    <property type="term" value="P:translation"/>
    <property type="evidence" value="ECO:0007669"/>
    <property type="project" value="UniProtKB-UniRule"/>
</dbReference>
<dbReference type="CDD" id="cd00337">
    <property type="entry name" value="Ribosomal_uL14"/>
    <property type="match status" value="1"/>
</dbReference>
<dbReference type="FunFam" id="2.40.150.20:FF:000001">
    <property type="entry name" value="50S ribosomal protein L14"/>
    <property type="match status" value="1"/>
</dbReference>
<dbReference type="Gene3D" id="2.40.150.20">
    <property type="entry name" value="Ribosomal protein L14"/>
    <property type="match status" value="1"/>
</dbReference>
<dbReference type="HAMAP" id="MF_01367">
    <property type="entry name" value="Ribosomal_uL14"/>
    <property type="match status" value="1"/>
</dbReference>
<dbReference type="InterPro" id="IPR000218">
    <property type="entry name" value="Ribosomal_uL14"/>
</dbReference>
<dbReference type="InterPro" id="IPR005745">
    <property type="entry name" value="Ribosomal_uL14_bac-type"/>
</dbReference>
<dbReference type="InterPro" id="IPR019972">
    <property type="entry name" value="Ribosomal_uL14_CS"/>
</dbReference>
<dbReference type="InterPro" id="IPR036853">
    <property type="entry name" value="Ribosomal_uL14_sf"/>
</dbReference>
<dbReference type="NCBIfam" id="TIGR01067">
    <property type="entry name" value="rplN_bact"/>
    <property type="match status" value="1"/>
</dbReference>
<dbReference type="PANTHER" id="PTHR11761">
    <property type="entry name" value="50S/60S RIBOSOMAL PROTEIN L14/L23"/>
    <property type="match status" value="1"/>
</dbReference>
<dbReference type="PANTHER" id="PTHR11761:SF3">
    <property type="entry name" value="LARGE RIBOSOMAL SUBUNIT PROTEIN UL14M"/>
    <property type="match status" value="1"/>
</dbReference>
<dbReference type="Pfam" id="PF00238">
    <property type="entry name" value="Ribosomal_L14"/>
    <property type="match status" value="1"/>
</dbReference>
<dbReference type="SMART" id="SM01374">
    <property type="entry name" value="Ribosomal_L14"/>
    <property type="match status" value="1"/>
</dbReference>
<dbReference type="SUPFAM" id="SSF50193">
    <property type="entry name" value="Ribosomal protein L14"/>
    <property type="match status" value="1"/>
</dbReference>
<dbReference type="PROSITE" id="PS00049">
    <property type="entry name" value="RIBOSOMAL_L14"/>
    <property type="match status" value="1"/>
</dbReference>
<protein>
    <recommendedName>
        <fullName evidence="1">Large ribosomal subunit protein uL14</fullName>
    </recommendedName>
    <alternativeName>
        <fullName evidence="2">50S ribosomal protein L14</fullName>
    </alternativeName>
</protein>
<evidence type="ECO:0000255" key="1">
    <source>
        <dbReference type="HAMAP-Rule" id="MF_01367"/>
    </source>
</evidence>
<evidence type="ECO:0000305" key="2"/>
<feature type="chain" id="PRO_0000266546" description="Large ribosomal subunit protein uL14">
    <location>
        <begin position="1"/>
        <end position="122"/>
    </location>
</feature>
<comment type="function">
    <text evidence="1">Binds to 23S rRNA. Forms part of two intersubunit bridges in the 70S ribosome.</text>
</comment>
<comment type="subunit">
    <text evidence="1">Part of the 50S ribosomal subunit. Forms a cluster with proteins L3 and L19. In the 70S ribosome, L14 and L19 interact and together make contacts with the 16S rRNA in bridges B5 and B8.</text>
</comment>
<comment type="similarity">
    <text evidence="1">Belongs to the universal ribosomal protein uL14 family.</text>
</comment>
<keyword id="KW-1185">Reference proteome</keyword>
<keyword id="KW-0687">Ribonucleoprotein</keyword>
<keyword id="KW-0689">Ribosomal protein</keyword>
<keyword id="KW-0694">RNA-binding</keyword>
<keyword id="KW-0699">rRNA-binding</keyword>
<gene>
    <name evidence="1" type="primary">rplN</name>
    <name type="ordered locus">RPB_2305</name>
</gene>
<accession>Q2IXQ0</accession>